<organism>
    <name type="scientific">Cricetulus longicaudatus</name>
    <name type="common">Long-tailed dwarf hamster</name>
    <dbReference type="NCBI Taxonomy" id="10030"/>
    <lineage>
        <taxon>Eukaryota</taxon>
        <taxon>Metazoa</taxon>
        <taxon>Chordata</taxon>
        <taxon>Craniata</taxon>
        <taxon>Vertebrata</taxon>
        <taxon>Euteleostomi</taxon>
        <taxon>Mammalia</taxon>
        <taxon>Eutheria</taxon>
        <taxon>Euarchontoglires</taxon>
        <taxon>Glires</taxon>
        <taxon>Rodentia</taxon>
        <taxon>Myomorpha</taxon>
        <taxon>Muroidea</taxon>
        <taxon>Cricetidae</taxon>
        <taxon>Cricetinae</taxon>
        <taxon>Cricetulus</taxon>
    </lineage>
</organism>
<gene>
    <name type="primary">Prmt7</name>
</gene>
<reference key="1">
    <citation type="journal article" date="2003" name="Cancer Res.">
        <title>Identification of new drug sensitivity genes using genetic suppressor elements: protein arginine N-methyltransferase mediates cell sensitivity to DNA-damaging agents.</title>
        <authorList>
            <person name="Gros L."/>
            <person name="Delaporte C."/>
            <person name="Frey S."/>
            <person name="Decesse J."/>
            <person name="de Saint-Vincent B.R."/>
            <person name="Cavarec L."/>
            <person name="Dubart A."/>
            <person name="Gudkov A.V."/>
            <person name="Jacquemin-Sablon A."/>
        </authorList>
    </citation>
    <scope>NUCLEOTIDE SEQUENCE [MRNA] (ISOFORMS 1; 2; 3 AND 4)</scope>
    <source>
        <tissue>Lung</tissue>
    </source>
</reference>
<reference key="2">
    <citation type="journal article" date="2006" name="Biochim. Biophys. Acta">
        <title>Characterization of prmt7alpha and beta isozymes from Chinese hamster cells sensitive and resistant to topoisomerase II inhibitors.</title>
        <authorList>
            <person name="Gros L."/>
            <person name="Renodon-Corniere A."/>
            <person name="de Saint Vincent B.R."/>
            <person name="Feder M."/>
            <person name="Bujnicki J.M."/>
            <person name="Jacquemin-Sablon A."/>
        </authorList>
    </citation>
    <scope>SUBUNIT</scope>
    <scope>SUBCELLULAR LOCATION</scope>
</reference>
<reference key="3">
    <citation type="journal article" date="2008" name="FEBS Lett.">
        <title>Protein arginine (N)-methyl transferase 7 (PRMT7) as a potential target for the sensitization of tumor cells to camptothecins.</title>
        <authorList>
            <person name="Verbiest V."/>
            <person name="Montaudon D."/>
            <person name="Tautu M.T."/>
            <person name="Moukarzel J."/>
            <person name="Portail J.-P."/>
            <person name="Markovits J."/>
            <person name="Robert J."/>
            <person name="Ichas F."/>
            <person name="Pourquier P."/>
        </authorList>
    </citation>
    <scope>INCREASED SENSITIVITY TO CAMPTOTHECIN</scope>
</reference>
<accession>Q99MI9</accession>
<accession>Q5S3S4</accession>
<accession>Q5S3S5</accession>
<accession>Q5S3S6</accession>
<accession>Q99MJ0</accession>
<feature type="chain" id="PRO_0000212334" description="Protein arginine N-methyltransferase 7">
    <location>
        <begin position="1"/>
        <end position="692"/>
    </location>
</feature>
<feature type="domain" description="SAM-dependent MTase PRMT-type 1" evidence="4">
    <location>
        <begin position="14"/>
        <end position="345"/>
    </location>
</feature>
<feature type="domain" description="SAM-dependent MTase PRMT-type 2" evidence="4">
    <location>
        <begin position="358"/>
        <end position="684"/>
    </location>
</feature>
<feature type="active site" evidence="1">
    <location>
        <position position="144"/>
    </location>
</feature>
<feature type="active site" evidence="1">
    <location>
        <position position="153"/>
    </location>
</feature>
<feature type="modified residue" description="Omega-N-methylarginine" evidence="2">
    <location>
        <position position="32"/>
    </location>
</feature>
<feature type="splice variant" id="VSP_037251" description="In isoform 4." evidence="6">
    <original>MKVFCGRANPTTGSLEWLEEDEHYDYHQEIARSSYADMLHDKDRNIKYYQGIRAAVSRVKDRGQKALVLDIGTGTGLLSMMAVTAGADFCYAIE</original>
    <variation>MFRVKLWDQSQ</variation>
    <location>
        <begin position="1"/>
        <end position="94"/>
    </location>
</feature>
<feature type="splice variant" id="VSP_037252" description="In isoform 3." evidence="6">
    <location>
        <begin position="1"/>
        <end position="37"/>
    </location>
</feature>
<feature type="splice variant" id="VSP_005212" description="In isoform 2." evidence="6">
    <original>M</original>
    <variation>MAAALAASGMLPTADLFLRRKLTRPHFCANIEELVGNM</variation>
    <location>
        <position position="1"/>
    </location>
</feature>
<dbReference type="EC" id="2.1.1.321" evidence="3"/>
<dbReference type="EMBL" id="AF336043">
    <property type="protein sequence ID" value="AAK20884.1"/>
    <property type="molecule type" value="mRNA"/>
</dbReference>
<dbReference type="EMBL" id="AF336044">
    <property type="protein sequence ID" value="AAK20885.1"/>
    <property type="molecule type" value="mRNA"/>
</dbReference>
<dbReference type="EMBL" id="AY781113">
    <property type="protein sequence ID" value="AAV52835.1"/>
    <property type="molecule type" value="mRNA"/>
</dbReference>
<dbReference type="EMBL" id="AY781114">
    <property type="protein sequence ID" value="AAV52836.1"/>
    <property type="molecule type" value="mRNA"/>
</dbReference>
<dbReference type="EMBL" id="AY781115">
    <property type="protein sequence ID" value="AAV52837.1"/>
    <property type="molecule type" value="mRNA"/>
</dbReference>
<dbReference type="EMBL" id="AY781116">
    <property type="protein sequence ID" value="AAV52838.1"/>
    <property type="molecule type" value="mRNA"/>
</dbReference>
<dbReference type="SMR" id="Q99MI9"/>
<dbReference type="GO" id="GO:0005829">
    <property type="term" value="C:cytosol"/>
    <property type="evidence" value="ECO:0000250"/>
    <property type="project" value="UniProtKB"/>
</dbReference>
<dbReference type="GO" id="GO:0005634">
    <property type="term" value="C:nucleus"/>
    <property type="evidence" value="ECO:0000250"/>
    <property type="project" value="UniProtKB"/>
</dbReference>
<dbReference type="GO" id="GO:0044020">
    <property type="term" value="F:histone H4R3 methyltransferase activity"/>
    <property type="evidence" value="ECO:0000250"/>
    <property type="project" value="UniProtKB"/>
</dbReference>
<dbReference type="GO" id="GO:0035241">
    <property type="term" value="F:protein-arginine omega-N monomethyltransferase activity"/>
    <property type="evidence" value="ECO:0007669"/>
    <property type="project" value="UniProtKB-EC"/>
</dbReference>
<dbReference type="GO" id="GO:0035243">
    <property type="term" value="F:protein-arginine omega-N symmetric methyltransferase activity"/>
    <property type="evidence" value="ECO:0000250"/>
    <property type="project" value="UniProtKB"/>
</dbReference>
<dbReference type="GO" id="GO:0071514">
    <property type="term" value="P:genomic imprinting"/>
    <property type="evidence" value="ECO:0000250"/>
    <property type="project" value="UniProtKB"/>
</dbReference>
<dbReference type="GO" id="GO:0018216">
    <property type="term" value="P:peptidyl-arginine methylation"/>
    <property type="evidence" value="ECO:0000250"/>
    <property type="project" value="UniProtKB"/>
</dbReference>
<dbReference type="GO" id="GO:0000387">
    <property type="term" value="P:spliceosomal snRNP assembly"/>
    <property type="evidence" value="ECO:0000250"/>
    <property type="project" value="UniProtKB"/>
</dbReference>
<dbReference type="CDD" id="cd02440">
    <property type="entry name" value="AdoMet_MTases"/>
    <property type="match status" value="1"/>
</dbReference>
<dbReference type="FunFam" id="2.70.160.11:FF:000010">
    <property type="entry name" value="Protein arginine N-methyltransferase"/>
    <property type="match status" value="1"/>
</dbReference>
<dbReference type="FunFam" id="2.70.160.11:FF:000004">
    <property type="entry name" value="Protein arginine N-methyltransferase 7"/>
    <property type="match status" value="1"/>
</dbReference>
<dbReference type="FunFam" id="3.40.50.150:FF:000070">
    <property type="entry name" value="Protein arginine N-methyltransferase 7"/>
    <property type="match status" value="1"/>
</dbReference>
<dbReference type="FunFam" id="3.40.50.150:FF:000071">
    <property type="entry name" value="Protein arginine N-methyltransferase 7"/>
    <property type="match status" value="1"/>
</dbReference>
<dbReference type="Gene3D" id="2.70.160.11">
    <property type="entry name" value="Hnrnp arginine n-methyltransferase1"/>
    <property type="match status" value="2"/>
</dbReference>
<dbReference type="Gene3D" id="3.40.50.150">
    <property type="entry name" value="Vaccinia Virus protein VP39"/>
    <property type="match status" value="2"/>
</dbReference>
<dbReference type="InterPro" id="IPR025799">
    <property type="entry name" value="Arg_MeTrfase"/>
</dbReference>
<dbReference type="InterPro" id="IPR014644">
    <property type="entry name" value="MeTrfase_PRMT7"/>
</dbReference>
<dbReference type="InterPro" id="IPR055135">
    <property type="entry name" value="PRMT_dom"/>
</dbReference>
<dbReference type="InterPro" id="IPR029063">
    <property type="entry name" value="SAM-dependent_MTases_sf"/>
</dbReference>
<dbReference type="PANTHER" id="PTHR11006">
    <property type="entry name" value="PROTEIN ARGININE N-METHYLTRANSFERASE"/>
    <property type="match status" value="1"/>
</dbReference>
<dbReference type="PANTHER" id="PTHR11006:SF4">
    <property type="entry name" value="PROTEIN ARGININE N-METHYLTRANSFERASE 7"/>
    <property type="match status" value="1"/>
</dbReference>
<dbReference type="Pfam" id="PF06325">
    <property type="entry name" value="PrmA"/>
    <property type="match status" value="1"/>
</dbReference>
<dbReference type="Pfam" id="PF22528">
    <property type="entry name" value="PRMT_C"/>
    <property type="match status" value="2"/>
</dbReference>
<dbReference type="PIRSF" id="PIRSF036946">
    <property type="entry name" value="Arg_N-mtase"/>
    <property type="match status" value="1"/>
</dbReference>
<dbReference type="SUPFAM" id="SSF53335">
    <property type="entry name" value="S-adenosyl-L-methionine-dependent methyltransferases"/>
    <property type="match status" value="2"/>
</dbReference>
<dbReference type="PROSITE" id="PS51678">
    <property type="entry name" value="SAM_MT_PRMT"/>
    <property type="match status" value="2"/>
</dbReference>
<keyword id="KW-0025">Alternative splicing</keyword>
<keyword id="KW-0156">Chromatin regulator</keyword>
<keyword id="KW-0963">Cytoplasm</keyword>
<keyword id="KW-0221">Differentiation</keyword>
<keyword id="KW-0488">Methylation</keyword>
<keyword id="KW-0489">Methyltransferase</keyword>
<keyword id="KW-0539">Nucleus</keyword>
<keyword id="KW-0677">Repeat</keyword>
<keyword id="KW-0949">S-adenosyl-L-methionine</keyword>
<keyword id="KW-0804">Transcription</keyword>
<keyword id="KW-0805">Transcription regulation</keyword>
<keyword id="KW-0808">Transferase</keyword>
<comment type="function">
    <text evidence="3">Arginine methyltransferase that can both catalyze the formation of omega-N monomethylarginine (MMA) and symmetrical dimethylarginine (sDMA), with a preference for the formation of MMA. Specifically mediates the symmetrical dimethylation of arginine residues in the small nuclear ribonucleoproteins Sm D1 (SNRPD1) and Sm D3 (SNRPD3); such methylation being required for the assembly and biogenesis of snRNP core particles. Specifically mediates the symmetric dimethylation of histone H4 'Arg-3' to form H4R3me2s. Plays a role in gene imprinting by being recruited by CTCFL at the H19 imprinted control region (ICR) and methylating histone H4 to form H4R3me2s, possibly leading to recruit DNA methyltransferases at these sites. May also play a role in embryonic stem cell (ESC) pluripotency. Also able to mediate the arginine methylation of histone H2A and myelin basic protein (MBP) in vitro; the relevance of such results is however unclear in vivo.</text>
</comment>
<comment type="catalytic activity">
    <reaction evidence="3">
        <text>L-arginyl-[protein] + S-adenosyl-L-methionine = N(omega)-methyl-L-arginyl-[protein] + S-adenosyl-L-homocysteine + H(+)</text>
        <dbReference type="Rhea" id="RHEA:48100"/>
        <dbReference type="Rhea" id="RHEA-COMP:10532"/>
        <dbReference type="Rhea" id="RHEA-COMP:11990"/>
        <dbReference type="ChEBI" id="CHEBI:15378"/>
        <dbReference type="ChEBI" id="CHEBI:29965"/>
        <dbReference type="ChEBI" id="CHEBI:57856"/>
        <dbReference type="ChEBI" id="CHEBI:59789"/>
        <dbReference type="ChEBI" id="CHEBI:65280"/>
        <dbReference type="EC" id="2.1.1.321"/>
    </reaction>
</comment>
<comment type="subunit">
    <text evidence="1 5">Interacts with CTCFL, PRMT5 and SNRPD3 (By similarity). Homodimer and heterodimer.</text>
</comment>
<comment type="subcellular location">
    <molecule>Isoform 1</molecule>
    <subcellularLocation>
        <location>Cytoplasm</location>
    </subcellularLocation>
    <subcellularLocation>
        <location>Nucleus</location>
    </subcellularLocation>
</comment>
<comment type="subcellular location">
    <molecule>Isoform 2</molecule>
    <subcellularLocation>
        <location>Cytoplasm</location>
    </subcellularLocation>
</comment>
<comment type="alternative products">
    <event type="alternative splicing"/>
    <isoform>
        <id>Q99MI9-2</id>
        <name>1</name>
        <name>Alpha</name>
        <name>p77</name>
        <name>p78</name>
        <sequence type="displayed"/>
    </isoform>
    <isoform>
        <id>Q99MI9-1</id>
        <name>2</name>
        <name>Beta</name>
        <name>p82</name>
        <sequence type="described" ref="VSP_005212"/>
    </isoform>
    <isoform>
        <id>Q99MI9-3</id>
        <name>3</name>
        <sequence type="described" ref="VSP_037252"/>
    </isoform>
    <isoform>
        <id>Q99MI9-4</id>
        <name>4</name>
        <sequence type="described" ref="VSP_037251"/>
    </isoform>
</comment>
<comment type="miscellaneous">
    <text>Confers resistance or sensitivity to DNA-damaging agents. Down-regulation confers increased sensitivity to the Top1 inhibitor camptothecin (CPT).</text>
</comment>
<comment type="similarity">
    <text evidence="4">Belongs to the class I-like SAM-binding methyltransferase superfamily. Protein arginine N-methyltransferase family. PRMT7 subfamily.</text>
</comment>
<name>ANM7_CRILO</name>
<evidence type="ECO:0000250" key="1"/>
<evidence type="ECO:0000250" key="2">
    <source>
        <dbReference type="UniProtKB" id="Q922X9"/>
    </source>
</evidence>
<evidence type="ECO:0000250" key="3">
    <source>
        <dbReference type="UniProtKB" id="Q9NVM4"/>
    </source>
</evidence>
<evidence type="ECO:0000255" key="4">
    <source>
        <dbReference type="PROSITE-ProRule" id="PRU01015"/>
    </source>
</evidence>
<evidence type="ECO:0000269" key="5">
    <source>
    </source>
</evidence>
<evidence type="ECO:0000303" key="6">
    <source>
    </source>
</evidence>
<proteinExistence type="evidence at protein level"/>
<sequence>MKVFCGRANPTTGSLEWLEEDEHYDYHQEIARSSYADMLHDKDRNIKYYQGIRAAVSRVKDRGQKALVLDIGTGTGLLSMMAVTAGADFCYAIEVFKPMADAAVKIVEKNGFSDKIKVINKHSTEVTVGPDGDLPCRANILVTELFDTELIGEGALPSYEHAHRHLVQENCEAVPHKATVYAQLVESRRMWSWNKLFPVHVQTSLGEQVIVPPSELERCPGAPSVYDIQLNQVPSTDFTALSDVLPMFSVDFSKQVSSSAACHSKQFVPLASGQAQVVLSWWDIEMDPEGKITCTMAPFWAQTNPQELQWRDHWMQCVYFLPQEEPVVQGSPRCLVAHHDDYCVWYSLQRTSADENEEVYQVRPVCDCQAHLLWNRPRFGEINDQDRTDQYAQALRTVLMPGTICLCVSDGSLLSLLAHHLGAEQVFTVESSAASYRLMKRIFKANHLEDKVSIIKKRPELLTSADLEGKKVSLLLGEPFFATSLLPWHNLYFWYARTSVDQHLEPGAVVMPQAASLYAMIVEFRDLWRIRSPCGDCEGFDVHIMDDMIKHSLDFRESREAEPHPLWEYPCRSLSEPQQILTFDFQQPVPQKPVHAEGSMELRRPGKSHGAVLWMEYHLTPDSTVSTGLMNPLEDKGDCCWNPHCKQAVYFLSTTVDPRVPLDGPQSVSYAVEFHPLTGDITMEFRLADTLN</sequence>
<protein>
    <recommendedName>
        <fullName>Protein arginine N-methyltransferase 7</fullName>
        <ecNumber evidence="3">2.1.1.321</ecNumber>
    </recommendedName>
    <alternativeName>
        <fullName>Histone-arginine N-methyltransferase PRMT7</fullName>
    </alternativeName>
    <alternativeName>
        <fullName>[Myelin basic protein]-arginine N-methyltransferase PRMT7</fullName>
    </alternativeName>
</protein>